<sequence>MLGREDIRTYQVYLANEKKLAPGSIHIALSALRFFFNVTLERDWAPEEVLPLPKKPQKLPIILSPDEVQHFLGCVADVKHHAILTTCYAAGLRISEAVQLKPTDIDSQRMVVRVEHGKGQKDRYVMLSPKLLEILRDYWRMWRPEAWLFPGDRAGHPITRYAVGQACVKPHDLSRLSKPVTPHSLRHAFVVHLLEAGADVRTIQPLLGHRSLATTAHYLRIATNKVCATESPFELLPRPAPTPPPSKPQYF</sequence>
<reference key="1">
    <citation type="journal article" date="1997" name="Nature">
        <title>Molecular basis of symbiosis between Rhizobium and legumes.</title>
        <authorList>
            <person name="Freiberg C.A."/>
            <person name="Fellay R."/>
            <person name="Bairoch A."/>
            <person name="Broughton W.J."/>
            <person name="Rosenthal A."/>
            <person name="Perret X."/>
        </authorList>
    </citation>
    <scope>NUCLEOTIDE SEQUENCE [LARGE SCALE GENOMIC DNA]</scope>
    <source>
        <strain>NBRC 101917 / NGR234</strain>
    </source>
</reference>
<reference key="2">
    <citation type="journal article" date="2009" name="Appl. Environ. Microbiol.">
        <title>Rhizobium sp. strain NGR234 possesses a remarkable number of secretion systems.</title>
        <authorList>
            <person name="Schmeisser C."/>
            <person name="Liesegang H."/>
            <person name="Krysciak D."/>
            <person name="Bakkou N."/>
            <person name="Le Quere A."/>
            <person name="Wollherr A."/>
            <person name="Heinemeyer I."/>
            <person name="Morgenstern B."/>
            <person name="Pommerening-Roeser A."/>
            <person name="Flores M."/>
            <person name="Palacios R."/>
            <person name="Brenner S."/>
            <person name="Gottschalk G."/>
            <person name="Schmitz R.A."/>
            <person name="Broughton W.J."/>
            <person name="Perret X."/>
            <person name="Strittmatter A.W."/>
            <person name="Streit W.R."/>
        </authorList>
    </citation>
    <scope>NUCLEOTIDE SEQUENCE [LARGE SCALE GENOMIC DNA]</scope>
    <source>
        <strain>NBRC 101917 / NGR234</strain>
    </source>
</reference>
<organism>
    <name type="scientific">Sinorhizobium fredii (strain NBRC 101917 / NGR234)</name>
    <dbReference type="NCBI Taxonomy" id="394"/>
    <lineage>
        <taxon>Bacteria</taxon>
        <taxon>Pseudomonadati</taxon>
        <taxon>Pseudomonadota</taxon>
        <taxon>Alphaproteobacteria</taxon>
        <taxon>Hyphomicrobiales</taxon>
        <taxon>Rhizobiaceae</taxon>
        <taxon>Sinorhizobium/Ensifer group</taxon>
        <taxon>Sinorhizobium</taxon>
    </lineage>
</organism>
<geneLocation type="plasmid">
    <name>sym pNGR234a</name>
</geneLocation>
<proteinExistence type="inferred from homology"/>
<feature type="chain" id="PRO_0000197575" description="Putative integrase/recombinase y4eF">
    <location>
        <begin position="1"/>
        <end position="251"/>
    </location>
</feature>
<feature type="domain" description="Core-binding (CB)" evidence="2">
    <location>
        <begin position="1"/>
        <end position="40"/>
    </location>
</feature>
<feature type="domain" description="Tyr recombinase" evidence="1">
    <location>
        <begin position="58"/>
        <end position="231"/>
    </location>
</feature>
<feature type="active site" evidence="1">
    <location>
        <position position="93"/>
    </location>
</feature>
<feature type="active site" evidence="1">
    <location>
        <position position="118"/>
    </location>
</feature>
<feature type="active site" evidence="1">
    <location>
        <position position="183"/>
    </location>
</feature>
<feature type="active site" evidence="1">
    <location>
        <position position="186"/>
    </location>
</feature>
<feature type="active site" evidence="1">
    <location>
        <position position="209"/>
    </location>
</feature>
<feature type="active site" description="O-(3'-phospho-DNA)-tyrosine intermediate" evidence="1">
    <location>
        <position position="218"/>
    </location>
</feature>
<dbReference type="EMBL" id="U00090">
    <property type="protein sequence ID" value="AAB91651.1"/>
    <property type="molecule type" value="Genomic_DNA"/>
</dbReference>
<dbReference type="RefSeq" id="NP_443839.1">
    <property type="nucleotide sequence ID" value="NC_000914.2"/>
</dbReference>
<dbReference type="SMR" id="P55429"/>
<dbReference type="KEGG" id="rhi:NGR_a03870"/>
<dbReference type="PATRIC" id="fig|394.7.peg.403"/>
<dbReference type="eggNOG" id="COG4974">
    <property type="taxonomic scope" value="Bacteria"/>
</dbReference>
<dbReference type="HOGENOM" id="CLU_027562_9_5_5"/>
<dbReference type="OrthoDB" id="9801717at2"/>
<dbReference type="Proteomes" id="UP000001054">
    <property type="component" value="Plasmid pNGR234a"/>
</dbReference>
<dbReference type="GO" id="GO:0003677">
    <property type="term" value="F:DNA binding"/>
    <property type="evidence" value="ECO:0007669"/>
    <property type="project" value="UniProtKB-KW"/>
</dbReference>
<dbReference type="GO" id="GO:0015074">
    <property type="term" value="P:DNA integration"/>
    <property type="evidence" value="ECO:0007669"/>
    <property type="project" value="UniProtKB-KW"/>
</dbReference>
<dbReference type="GO" id="GO:0006310">
    <property type="term" value="P:DNA recombination"/>
    <property type="evidence" value="ECO:0007669"/>
    <property type="project" value="UniProtKB-KW"/>
</dbReference>
<dbReference type="GO" id="GO:0075713">
    <property type="term" value="P:establishment of integrated proviral latency"/>
    <property type="evidence" value="ECO:0007669"/>
    <property type="project" value="UniProtKB-KW"/>
</dbReference>
<dbReference type="GO" id="GO:0046718">
    <property type="term" value="P:symbiont entry into host cell"/>
    <property type="evidence" value="ECO:0007669"/>
    <property type="project" value="UniProtKB-KW"/>
</dbReference>
<dbReference type="GO" id="GO:0044826">
    <property type="term" value="P:viral genome integration into host DNA"/>
    <property type="evidence" value="ECO:0007669"/>
    <property type="project" value="UniProtKB-KW"/>
</dbReference>
<dbReference type="CDD" id="cd01193">
    <property type="entry name" value="INT_IntI_C"/>
    <property type="match status" value="1"/>
</dbReference>
<dbReference type="Gene3D" id="1.10.150.130">
    <property type="match status" value="1"/>
</dbReference>
<dbReference type="Gene3D" id="1.10.443.10">
    <property type="entry name" value="Intergrase catalytic core"/>
    <property type="match status" value="1"/>
</dbReference>
<dbReference type="InterPro" id="IPR044068">
    <property type="entry name" value="CB"/>
</dbReference>
<dbReference type="InterPro" id="IPR011010">
    <property type="entry name" value="DNA_brk_join_enz"/>
</dbReference>
<dbReference type="InterPro" id="IPR013762">
    <property type="entry name" value="Integrase-like_cat_sf"/>
</dbReference>
<dbReference type="InterPro" id="IPR002104">
    <property type="entry name" value="Integrase_catalytic"/>
</dbReference>
<dbReference type="InterPro" id="IPR010998">
    <property type="entry name" value="Integrase_recombinase_N"/>
</dbReference>
<dbReference type="InterPro" id="IPR004107">
    <property type="entry name" value="Integrase_SAM-like_N"/>
</dbReference>
<dbReference type="InterPro" id="IPR050090">
    <property type="entry name" value="Tyrosine_recombinase_XerCD"/>
</dbReference>
<dbReference type="PANTHER" id="PTHR30349">
    <property type="entry name" value="PHAGE INTEGRASE-RELATED"/>
    <property type="match status" value="1"/>
</dbReference>
<dbReference type="PANTHER" id="PTHR30349:SF64">
    <property type="entry name" value="PROPHAGE INTEGRASE INTD-RELATED"/>
    <property type="match status" value="1"/>
</dbReference>
<dbReference type="Pfam" id="PF13495">
    <property type="entry name" value="Phage_int_SAM_4"/>
    <property type="match status" value="1"/>
</dbReference>
<dbReference type="Pfam" id="PF00589">
    <property type="entry name" value="Phage_integrase"/>
    <property type="match status" value="1"/>
</dbReference>
<dbReference type="SUPFAM" id="SSF56349">
    <property type="entry name" value="DNA breaking-rejoining enzymes"/>
    <property type="match status" value="1"/>
</dbReference>
<dbReference type="PROSITE" id="PS51900">
    <property type="entry name" value="CB"/>
    <property type="match status" value="1"/>
</dbReference>
<dbReference type="PROSITE" id="PS51898">
    <property type="entry name" value="TYR_RECOMBINASE"/>
    <property type="match status" value="1"/>
</dbReference>
<evidence type="ECO:0000255" key="1">
    <source>
        <dbReference type="PROSITE-ProRule" id="PRU01246"/>
    </source>
</evidence>
<evidence type="ECO:0000255" key="2">
    <source>
        <dbReference type="PROSITE-ProRule" id="PRU01248"/>
    </source>
</evidence>
<evidence type="ECO:0000305" key="3"/>
<name>Y4EF_SINFN</name>
<comment type="similarity">
    <text evidence="3">Belongs to the 'phage' integrase family.</text>
</comment>
<keyword id="KW-0229">DNA integration</keyword>
<keyword id="KW-0233">DNA recombination</keyword>
<keyword id="KW-0238">DNA-binding</keyword>
<keyword id="KW-0614">Plasmid</keyword>
<keyword id="KW-1185">Reference proteome</keyword>
<keyword id="KW-0814">Transposable element</keyword>
<keyword id="KW-1179">Viral genome integration</keyword>
<keyword id="KW-1160">Virus entry into host cell</keyword>
<accession>P55429</accession>
<protein>
    <recommendedName>
        <fullName>Putative integrase/recombinase y4eF</fullName>
    </recommendedName>
</protein>
<gene>
    <name type="ordered locus">NGR_a03870</name>
    <name type="ORF">y4eF</name>
</gene>